<evidence type="ECO:0000250" key="1"/>
<evidence type="ECO:0000255" key="2">
    <source>
        <dbReference type="PROSITE-ProRule" id="PRU00491"/>
    </source>
</evidence>
<feature type="chain" id="PRO_0000324546" description="Protein phosphatase 1 regulatory subunit 3B">
    <location>
        <begin position="1"/>
        <end position="293"/>
    </location>
</feature>
<feature type="domain" description="CBM21" evidence="2">
    <location>
        <begin position="129"/>
        <end position="237"/>
    </location>
</feature>
<keyword id="KW-0119">Carbohydrate metabolism</keyword>
<keyword id="KW-0321">Glycogen metabolism</keyword>
<keyword id="KW-1185">Reference proteome</keyword>
<protein>
    <recommendedName>
        <fullName>Protein phosphatase 1 regulatory subunit 3B</fullName>
    </recommendedName>
</protein>
<comment type="function">
    <text evidence="1">Acts as a glycogen-targeting subunit for phosphatase PP1. Facilitates interaction of the PP1 with enzymes of the glycogen metabolism and regulates its activity. Suppresses the rate at which PP1 dephosphorylates (inactivates) glycogen phosphorylase and enhances the rate at which it activates glycogen synthase and therefore limits glycogen breakdown (By similarity).</text>
</comment>
<comment type="subunit">
    <text evidence="1">Interacts with glycogen, PPP1CC catalytic subunit of PP1 and PYGL. Associates with glycogen particles. Forms complexes with debranching enzyme, glycogen phosphorylase, glycogen synthase and phosphorylase kinase which is necessary for its regulation of PP1 activity (By similarity).</text>
</comment>
<comment type="domain">
    <text evidence="1">The N-terminal region is required for binding to PP1, the central region is required for binding to glycogen and the C-terminal region is required for binding to glycogen phosphorylase, glycogen synthase and phosphorylase kinase.</text>
</comment>
<accession>Q803M0</accession>
<name>PPR3B_DANRE</name>
<organism>
    <name type="scientific">Danio rerio</name>
    <name type="common">Zebrafish</name>
    <name type="synonym">Brachydanio rerio</name>
    <dbReference type="NCBI Taxonomy" id="7955"/>
    <lineage>
        <taxon>Eukaryota</taxon>
        <taxon>Metazoa</taxon>
        <taxon>Chordata</taxon>
        <taxon>Craniata</taxon>
        <taxon>Vertebrata</taxon>
        <taxon>Euteleostomi</taxon>
        <taxon>Actinopterygii</taxon>
        <taxon>Neopterygii</taxon>
        <taxon>Teleostei</taxon>
        <taxon>Ostariophysi</taxon>
        <taxon>Cypriniformes</taxon>
        <taxon>Danionidae</taxon>
        <taxon>Danioninae</taxon>
        <taxon>Danio</taxon>
    </lineage>
</organism>
<reference key="1">
    <citation type="submission" date="2003-01" db="EMBL/GenBank/DDBJ databases">
        <authorList>
            <consortium name="NIH - Zebrafish Gene Collection (ZGC) project"/>
        </authorList>
    </citation>
    <scope>NUCLEOTIDE SEQUENCE [LARGE SCALE MRNA]</scope>
    <source>
        <strain>AB</strain>
        <tissue>Ovary</tissue>
    </source>
</reference>
<dbReference type="EMBL" id="BC044421">
    <property type="protein sequence ID" value="AAH44421.1"/>
    <property type="molecule type" value="mRNA"/>
</dbReference>
<dbReference type="EMBL" id="BC154237">
    <property type="protein sequence ID" value="AAI54238.1"/>
    <property type="molecule type" value="mRNA"/>
</dbReference>
<dbReference type="RefSeq" id="NP_997874.1">
    <property type="nucleotide sequence ID" value="NM_212709.1"/>
</dbReference>
<dbReference type="SMR" id="Q803M0"/>
<dbReference type="FunCoup" id="Q803M0">
    <property type="interactions" value="508"/>
</dbReference>
<dbReference type="STRING" id="7955.ENSDARP00000065669"/>
<dbReference type="CAZy" id="CBM21">
    <property type="family name" value="Carbohydrate-Binding Module Family 21"/>
</dbReference>
<dbReference type="PaxDb" id="7955-ENSDARP00000065669"/>
<dbReference type="Ensembl" id="ENSDART00000065670">
    <property type="protein sequence ID" value="ENSDARP00000065669"/>
    <property type="gene ID" value="ENSDARG00000044691"/>
</dbReference>
<dbReference type="Ensembl" id="ENSDART00000180816">
    <property type="protein sequence ID" value="ENSDARP00000145267"/>
    <property type="gene ID" value="ENSDARG00000044691"/>
</dbReference>
<dbReference type="Ensembl" id="ENSDART00000186251">
    <property type="protein sequence ID" value="ENSDARP00000153052"/>
    <property type="gene ID" value="ENSDARG00000110639"/>
</dbReference>
<dbReference type="Ensembl" id="ENSDART00000186479">
    <property type="protein sequence ID" value="ENSDARP00000149271"/>
    <property type="gene ID" value="ENSDARG00000114900"/>
</dbReference>
<dbReference type="GeneID" id="327285"/>
<dbReference type="KEGG" id="dre:327285"/>
<dbReference type="AGR" id="ZFIN:ZDB-GENE-030131-5496"/>
<dbReference type="CTD" id="79660"/>
<dbReference type="ZFIN" id="ZDB-GENE-030131-5496">
    <property type="gene designation" value="ppp1r3b"/>
</dbReference>
<dbReference type="eggNOG" id="KOG3986">
    <property type="taxonomic scope" value="Eukaryota"/>
</dbReference>
<dbReference type="HOGENOM" id="CLU_040215_2_1_1"/>
<dbReference type="InParanoid" id="Q803M0"/>
<dbReference type="OMA" id="YRIIQAE"/>
<dbReference type="OrthoDB" id="8942186at2759"/>
<dbReference type="PhylomeDB" id="Q803M0"/>
<dbReference type="TreeFam" id="TF105537"/>
<dbReference type="PRO" id="PR:Q803M0"/>
<dbReference type="Proteomes" id="UP000000437">
    <property type="component" value="Alternate scaffold 21"/>
</dbReference>
<dbReference type="Proteomes" id="UP000000437">
    <property type="component" value="Chromosome 21"/>
</dbReference>
<dbReference type="Bgee" id="ENSDARG00000044691">
    <property type="expression patterns" value="Expressed in cleaving embryo and 28 other cell types or tissues"/>
</dbReference>
<dbReference type="ExpressionAtlas" id="Q803M0">
    <property type="expression patterns" value="baseline"/>
</dbReference>
<dbReference type="GO" id="GO:0000164">
    <property type="term" value="C:protein phosphatase type 1 complex"/>
    <property type="evidence" value="ECO:0000318"/>
    <property type="project" value="GO_Central"/>
</dbReference>
<dbReference type="GO" id="GO:2001069">
    <property type="term" value="F:glycogen binding"/>
    <property type="evidence" value="ECO:0000318"/>
    <property type="project" value="GO_Central"/>
</dbReference>
<dbReference type="GO" id="GO:0008157">
    <property type="term" value="F:protein phosphatase 1 binding"/>
    <property type="evidence" value="ECO:0000318"/>
    <property type="project" value="GO_Central"/>
</dbReference>
<dbReference type="GO" id="GO:0019888">
    <property type="term" value="F:protein phosphatase regulator activity"/>
    <property type="evidence" value="ECO:0007669"/>
    <property type="project" value="InterPro"/>
</dbReference>
<dbReference type="GO" id="GO:0005977">
    <property type="term" value="P:glycogen metabolic process"/>
    <property type="evidence" value="ECO:0007669"/>
    <property type="project" value="UniProtKB-KW"/>
</dbReference>
<dbReference type="GO" id="GO:0005979">
    <property type="term" value="P:regulation of glycogen biosynthetic process"/>
    <property type="evidence" value="ECO:0000318"/>
    <property type="project" value="GO_Central"/>
</dbReference>
<dbReference type="GO" id="GO:0005981">
    <property type="term" value="P:regulation of glycogen catabolic process"/>
    <property type="evidence" value="ECO:0007669"/>
    <property type="project" value="InterPro"/>
</dbReference>
<dbReference type="CDD" id="cd22814">
    <property type="entry name" value="PBD_PPP1R3B"/>
    <property type="match status" value="1"/>
</dbReference>
<dbReference type="FunFam" id="2.60.40.2440:FF:000001">
    <property type="entry name" value="Protein phosphatase 1 regulatory subunit 3C"/>
    <property type="match status" value="1"/>
</dbReference>
<dbReference type="Gene3D" id="2.60.40.2440">
    <property type="entry name" value="Carbohydrate binding type-21 domain"/>
    <property type="match status" value="1"/>
</dbReference>
<dbReference type="InterPro" id="IPR005036">
    <property type="entry name" value="CBM21_dom"/>
</dbReference>
<dbReference type="InterPro" id="IPR038175">
    <property type="entry name" value="CBM21_dom_sf"/>
</dbReference>
<dbReference type="InterPro" id="IPR017434">
    <property type="entry name" value="Pase-1_reg-su_3B/C/D_met"/>
</dbReference>
<dbReference type="InterPro" id="IPR030682">
    <property type="entry name" value="PP1_3B"/>
</dbReference>
<dbReference type="InterPro" id="IPR050782">
    <property type="entry name" value="PP1_regulatory_subunit_3"/>
</dbReference>
<dbReference type="PANTHER" id="PTHR12307">
    <property type="entry name" value="PROTEIN PHOSPHATASE 1 REGULATORY SUBUNIT"/>
    <property type="match status" value="1"/>
</dbReference>
<dbReference type="PANTHER" id="PTHR12307:SF13">
    <property type="entry name" value="PROTEIN PHOSPHATASE 1 REGULATORY SUBUNIT 3B"/>
    <property type="match status" value="1"/>
</dbReference>
<dbReference type="Pfam" id="PF03370">
    <property type="entry name" value="CBM_21"/>
    <property type="match status" value="1"/>
</dbReference>
<dbReference type="PIRSF" id="PIRSF500814">
    <property type="entry name" value="PP1_GL"/>
    <property type="match status" value="1"/>
</dbReference>
<dbReference type="PIRSF" id="PIRSF038207">
    <property type="entry name" value="PP1_GT_animal"/>
    <property type="match status" value="1"/>
</dbReference>
<dbReference type="PROSITE" id="PS51159">
    <property type="entry name" value="CBM21"/>
    <property type="match status" value="1"/>
</dbReference>
<proteinExistence type="evidence at transcript level"/>
<gene>
    <name type="primary">ppp1r3b</name>
    <name type="ORF">zgc:55542</name>
</gene>
<sequence length="293" mass="33712">MPIELAMSLYLSSDEFLNPRASKYSRPLQPCLNQCKSSKLSFSSLKEQSEFNGVSRALMIPGRAKKHVSFADHKGLALTVVKIFSEFDDPIDIPDNIDNFFTSSLTVSEGKDKLTLDFDQPSADYLKFRQRIENDHVCLEHCMLKEKSIMGTVKVKNISFEKSVKLRITFNTWKNHTDVECQYVKDTYTGSNRDTFSFEASLPEQVPSHERIEFAICYEVNGDTLWDNNQGKNYRIIQSALRKSSNESNGGHQQYSQSDWDIHFDRYGSPRCSRGIFPHWPSYVGYEDIGPYY</sequence>